<gene>
    <name evidence="1" type="primary">ubiC</name>
    <name type="ordered locus">BB2524</name>
</gene>
<sequence>MTTPIPLARGWLPAAPSTLDPLRKYWLFRPGALTAGLRQLGHVRLRVLAEYPTGAPRDEADGMRIAAQSPVWVREVLMSIDGVDSVVARSLTPLRASHGVWQGMRRLLTRPLADMLYHDPGIHRSVFVCRRLAAGVPFHATAIARAPAGGPEPALWARRSAFWRAGQPLLVAECFLPAFWSLARAPVAPR</sequence>
<organism>
    <name type="scientific">Bordetella bronchiseptica (strain ATCC BAA-588 / NCTC 13252 / RB50)</name>
    <name type="common">Alcaligenes bronchisepticus</name>
    <dbReference type="NCBI Taxonomy" id="257310"/>
    <lineage>
        <taxon>Bacteria</taxon>
        <taxon>Pseudomonadati</taxon>
        <taxon>Pseudomonadota</taxon>
        <taxon>Betaproteobacteria</taxon>
        <taxon>Burkholderiales</taxon>
        <taxon>Alcaligenaceae</taxon>
        <taxon>Bordetella</taxon>
    </lineage>
</organism>
<protein>
    <recommendedName>
        <fullName evidence="1">Probable chorismate pyruvate-lyase</fullName>
        <shortName evidence="1">CL</shortName>
        <shortName evidence="1">CPL</shortName>
        <ecNumber evidence="1">4.1.3.40</ecNumber>
    </recommendedName>
</protein>
<proteinExistence type="inferred from homology"/>
<name>UBIC_BORBR</name>
<dbReference type="EC" id="4.1.3.40" evidence="1"/>
<dbReference type="EMBL" id="BX640444">
    <property type="protein sequence ID" value="CAE33018.1"/>
    <property type="molecule type" value="Genomic_DNA"/>
</dbReference>
<dbReference type="RefSeq" id="WP_010926548.1">
    <property type="nucleotide sequence ID" value="NC_002927.3"/>
</dbReference>
<dbReference type="SMR" id="Q7WJH0"/>
<dbReference type="KEGG" id="bbr:BB2524"/>
<dbReference type="eggNOG" id="COG3161">
    <property type="taxonomic scope" value="Bacteria"/>
</dbReference>
<dbReference type="HOGENOM" id="CLU_096824_0_0_4"/>
<dbReference type="UniPathway" id="UPA00232"/>
<dbReference type="Proteomes" id="UP000001027">
    <property type="component" value="Chromosome"/>
</dbReference>
<dbReference type="GO" id="GO:0005829">
    <property type="term" value="C:cytosol"/>
    <property type="evidence" value="ECO:0007669"/>
    <property type="project" value="TreeGrafter"/>
</dbReference>
<dbReference type="GO" id="GO:0008813">
    <property type="term" value="F:chorismate lyase activity"/>
    <property type="evidence" value="ECO:0007669"/>
    <property type="project" value="UniProtKB-UniRule"/>
</dbReference>
<dbReference type="GO" id="GO:0042866">
    <property type="term" value="P:pyruvate biosynthetic process"/>
    <property type="evidence" value="ECO:0007669"/>
    <property type="project" value="UniProtKB-UniRule"/>
</dbReference>
<dbReference type="GO" id="GO:0006744">
    <property type="term" value="P:ubiquinone biosynthetic process"/>
    <property type="evidence" value="ECO:0007669"/>
    <property type="project" value="UniProtKB-UniRule"/>
</dbReference>
<dbReference type="Gene3D" id="3.40.1410.10">
    <property type="entry name" value="Chorismate lyase-like"/>
    <property type="match status" value="1"/>
</dbReference>
<dbReference type="HAMAP" id="MF_01632">
    <property type="entry name" value="UbiC"/>
    <property type="match status" value="1"/>
</dbReference>
<dbReference type="InterPro" id="IPR007440">
    <property type="entry name" value="Chorismate--pyruvate_lyase"/>
</dbReference>
<dbReference type="InterPro" id="IPR028978">
    <property type="entry name" value="Chorismate_lyase_/UTRA_dom_sf"/>
</dbReference>
<dbReference type="PANTHER" id="PTHR38683">
    <property type="entry name" value="CHORISMATE PYRUVATE-LYASE"/>
    <property type="match status" value="1"/>
</dbReference>
<dbReference type="PANTHER" id="PTHR38683:SF1">
    <property type="entry name" value="CHORISMATE PYRUVATE-LYASE"/>
    <property type="match status" value="1"/>
</dbReference>
<dbReference type="Pfam" id="PF04345">
    <property type="entry name" value="Chor_lyase"/>
    <property type="match status" value="1"/>
</dbReference>
<dbReference type="SUPFAM" id="SSF64288">
    <property type="entry name" value="Chorismate lyase-like"/>
    <property type="match status" value="1"/>
</dbReference>
<feature type="chain" id="PRO_0000255900" description="Probable chorismate pyruvate-lyase">
    <location>
        <begin position="1"/>
        <end position="190"/>
    </location>
</feature>
<feature type="binding site" evidence="1">
    <location>
        <position position="74"/>
    </location>
    <ligand>
        <name>substrate</name>
    </ligand>
</feature>
<feature type="binding site" evidence="1">
    <location>
        <position position="112"/>
    </location>
    <ligand>
        <name>substrate</name>
    </ligand>
</feature>
<feature type="binding site" evidence="1">
    <location>
        <position position="173"/>
    </location>
    <ligand>
        <name>substrate</name>
    </ligand>
</feature>
<comment type="function">
    <text evidence="1">Removes the pyruvyl group from chorismate, with concomitant aromatization of the ring, to provide 4-hydroxybenzoate (4HB) for the ubiquinone pathway.</text>
</comment>
<comment type="catalytic activity">
    <reaction evidence="1">
        <text>chorismate = 4-hydroxybenzoate + pyruvate</text>
        <dbReference type="Rhea" id="RHEA:16505"/>
        <dbReference type="ChEBI" id="CHEBI:15361"/>
        <dbReference type="ChEBI" id="CHEBI:17879"/>
        <dbReference type="ChEBI" id="CHEBI:29748"/>
        <dbReference type="EC" id="4.1.3.40"/>
    </reaction>
</comment>
<comment type="pathway">
    <text evidence="1">Cofactor biosynthesis; ubiquinone biosynthesis.</text>
</comment>
<comment type="subcellular location">
    <subcellularLocation>
        <location evidence="1">Cytoplasm</location>
    </subcellularLocation>
</comment>
<comment type="similarity">
    <text evidence="1">Belongs to the UbiC family.</text>
</comment>
<accession>Q7WJH0</accession>
<keyword id="KW-0963">Cytoplasm</keyword>
<keyword id="KW-0456">Lyase</keyword>
<keyword id="KW-0670">Pyruvate</keyword>
<keyword id="KW-0831">Ubiquinone biosynthesis</keyword>
<reference key="1">
    <citation type="journal article" date="2003" name="Nat. Genet.">
        <title>Comparative analysis of the genome sequences of Bordetella pertussis, Bordetella parapertussis and Bordetella bronchiseptica.</title>
        <authorList>
            <person name="Parkhill J."/>
            <person name="Sebaihia M."/>
            <person name="Preston A."/>
            <person name="Murphy L.D."/>
            <person name="Thomson N.R."/>
            <person name="Harris D.E."/>
            <person name="Holden M.T.G."/>
            <person name="Churcher C.M."/>
            <person name="Bentley S.D."/>
            <person name="Mungall K.L."/>
            <person name="Cerdeno-Tarraga A.-M."/>
            <person name="Temple L."/>
            <person name="James K.D."/>
            <person name="Harris B."/>
            <person name="Quail M.A."/>
            <person name="Achtman M."/>
            <person name="Atkin R."/>
            <person name="Baker S."/>
            <person name="Basham D."/>
            <person name="Bason N."/>
            <person name="Cherevach I."/>
            <person name="Chillingworth T."/>
            <person name="Collins M."/>
            <person name="Cronin A."/>
            <person name="Davis P."/>
            <person name="Doggett J."/>
            <person name="Feltwell T."/>
            <person name="Goble A."/>
            <person name="Hamlin N."/>
            <person name="Hauser H."/>
            <person name="Holroyd S."/>
            <person name="Jagels K."/>
            <person name="Leather S."/>
            <person name="Moule S."/>
            <person name="Norberczak H."/>
            <person name="O'Neil S."/>
            <person name="Ormond D."/>
            <person name="Price C."/>
            <person name="Rabbinowitsch E."/>
            <person name="Rutter S."/>
            <person name="Sanders M."/>
            <person name="Saunders D."/>
            <person name="Seeger K."/>
            <person name="Sharp S."/>
            <person name="Simmonds M."/>
            <person name="Skelton J."/>
            <person name="Squares R."/>
            <person name="Squares S."/>
            <person name="Stevens K."/>
            <person name="Unwin L."/>
            <person name="Whitehead S."/>
            <person name="Barrell B.G."/>
            <person name="Maskell D.J."/>
        </authorList>
    </citation>
    <scope>NUCLEOTIDE SEQUENCE [LARGE SCALE GENOMIC DNA]</scope>
    <source>
        <strain>ATCC BAA-588 / NCTC 13252 / RB50</strain>
    </source>
</reference>
<evidence type="ECO:0000255" key="1">
    <source>
        <dbReference type="HAMAP-Rule" id="MF_01632"/>
    </source>
</evidence>